<accession>Q8YP60</accession>
<protein>
    <recommendedName>
        <fullName evidence="2">Small ribosomal subunit protein uS12</fullName>
    </recommendedName>
    <alternativeName>
        <fullName evidence="4">30S ribosomal protein S12</fullName>
    </alternativeName>
</protein>
<evidence type="ECO:0000250" key="1"/>
<evidence type="ECO:0000255" key="2">
    <source>
        <dbReference type="HAMAP-Rule" id="MF_00403"/>
    </source>
</evidence>
<evidence type="ECO:0000256" key="3">
    <source>
        <dbReference type="SAM" id="MobiDB-lite"/>
    </source>
</evidence>
<evidence type="ECO:0000305" key="4"/>
<keyword id="KW-0488">Methylation</keyword>
<keyword id="KW-1185">Reference proteome</keyword>
<keyword id="KW-0687">Ribonucleoprotein</keyword>
<keyword id="KW-0689">Ribosomal protein</keyword>
<keyword id="KW-0694">RNA-binding</keyword>
<keyword id="KW-0699">rRNA-binding</keyword>
<keyword id="KW-0820">tRNA-binding</keyword>
<sequence length="127" mass="14362">MPTIQQLIRTEREKARQKTKSPALKQCPQRRGVCTRVYTTTPKKPNSALRKVARVRLTSGFEVTAYIPGIGHNLQEHSVVMIRGGRVKDLPGVRYHIIRGTLDTAGVKDRKQGRSKYGTKRPKEAKK</sequence>
<dbReference type="EMBL" id="BA000019">
    <property type="protein sequence ID" value="BAB76039.1"/>
    <property type="molecule type" value="Genomic_DNA"/>
</dbReference>
<dbReference type="PIR" id="AE2348">
    <property type="entry name" value="AE2348"/>
</dbReference>
<dbReference type="RefSeq" id="WP_006196398.1">
    <property type="nucleotide sequence ID" value="NZ_RSCN01000027.1"/>
</dbReference>
<dbReference type="SMR" id="Q8YP60"/>
<dbReference type="STRING" id="103690.gene:10496389"/>
<dbReference type="GeneID" id="78017350"/>
<dbReference type="KEGG" id="ana:all4340"/>
<dbReference type="eggNOG" id="COG0048">
    <property type="taxonomic scope" value="Bacteria"/>
</dbReference>
<dbReference type="OrthoDB" id="9802366at2"/>
<dbReference type="Proteomes" id="UP000002483">
    <property type="component" value="Chromosome"/>
</dbReference>
<dbReference type="GO" id="GO:0015935">
    <property type="term" value="C:small ribosomal subunit"/>
    <property type="evidence" value="ECO:0007669"/>
    <property type="project" value="InterPro"/>
</dbReference>
<dbReference type="GO" id="GO:0019843">
    <property type="term" value="F:rRNA binding"/>
    <property type="evidence" value="ECO:0007669"/>
    <property type="project" value="UniProtKB-UniRule"/>
</dbReference>
<dbReference type="GO" id="GO:0003735">
    <property type="term" value="F:structural constituent of ribosome"/>
    <property type="evidence" value="ECO:0007669"/>
    <property type="project" value="InterPro"/>
</dbReference>
<dbReference type="GO" id="GO:0000049">
    <property type="term" value="F:tRNA binding"/>
    <property type="evidence" value="ECO:0007669"/>
    <property type="project" value="UniProtKB-UniRule"/>
</dbReference>
<dbReference type="GO" id="GO:0006412">
    <property type="term" value="P:translation"/>
    <property type="evidence" value="ECO:0007669"/>
    <property type="project" value="UniProtKB-UniRule"/>
</dbReference>
<dbReference type="CDD" id="cd03368">
    <property type="entry name" value="Ribosomal_S12"/>
    <property type="match status" value="1"/>
</dbReference>
<dbReference type="FunFam" id="2.40.50.140:FF:000001">
    <property type="entry name" value="30S ribosomal protein S12"/>
    <property type="match status" value="1"/>
</dbReference>
<dbReference type="Gene3D" id="2.40.50.140">
    <property type="entry name" value="Nucleic acid-binding proteins"/>
    <property type="match status" value="1"/>
</dbReference>
<dbReference type="HAMAP" id="MF_00403_B">
    <property type="entry name" value="Ribosomal_uS12_B"/>
    <property type="match status" value="1"/>
</dbReference>
<dbReference type="InterPro" id="IPR012340">
    <property type="entry name" value="NA-bd_OB-fold"/>
</dbReference>
<dbReference type="InterPro" id="IPR006032">
    <property type="entry name" value="Ribosomal_uS12"/>
</dbReference>
<dbReference type="InterPro" id="IPR005679">
    <property type="entry name" value="Ribosomal_uS12_bac"/>
</dbReference>
<dbReference type="NCBIfam" id="TIGR00981">
    <property type="entry name" value="rpsL_bact"/>
    <property type="match status" value="1"/>
</dbReference>
<dbReference type="PANTHER" id="PTHR11652">
    <property type="entry name" value="30S RIBOSOMAL PROTEIN S12 FAMILY MEMBER"/>
    <property type="match status" value="1"/>
</dbReference>
<dbReference type="Pfam" id="PF00164">
    <property type="entry name" value="Ribosom_S12_S23"/>
    <property type="match status" value="1"/>
</dbReference>
<dbReference type="PIRSF" id="PIRSF002133">
    <property type="entry name" value="Ribosomal_S12/S23"/>
    <property type="match status" value="1"/>
</dbReference>
<dbReference type="PRINTS" id="PR01034">
    <property type="entry name" value="RIBOSOMALS12"/>
</dbReference>
<dbReference type="SUPFAM" id="SSF50249">
    <property type="entry name" value="Nucleic acid-binding proteins"/>
    <property type="match status" value="1"/>
</dbReference>
<dbReference type="PROSITE" id="PS00055">
    <property type="entry name" value="RIBOSOMAL_S12"/>
    <property type="match status" value="1"/>
</dbReference>
<feature type="chain" id="PRO_0000146165" description="Small ribosomal subunit protein uS12">
    <location>
        <begin position="1"/>
        <end position="127"/>
    </location>
</feature>
<feature type="region of interest" description="Disordered" evidence="3">
    <location>
        <begin position="8"/>
        <end position="28"/>
    </location>
</feature>
<feature type="region of interest" description="Disordered" evidence="3">
    <location>
        <begin position="102"/>
        <end position="127"/>
    </location>
</feature>
<feature type="compositionally biased region" description="Basic residues" evidence="3">
    <location>
        <begin position="113"/>
        <end position="127"/>
    </location>
</feature>
<feature type="modified residue" description="3-methylthioaspartic acid" evidence="1">
    <location>
        <position position="89"/>
    </location>
</feature>
<gene>
    <name evidence="2" type="primary">rpsL</name>
    <name evidence="2" type="synonym">rps12</name>
    <name type="ordered locus">all4340</name>
</gene>
<organism>
    <name type="scientific">Nostoc sp. (strain PCC 7120 / SAG 25.82 / UTEX 2576)</name>
    <dbReference type="NCBI Taxonomy" id="103690"/>
    <lineage>
        <taxon>Bacteria</taxon>
        <taxon>Bacillati</taxon>
        <taxon>Cyanobacteriota</taxon>
        <taxon>Cyanophyceae</taxon>
        <taxon>Nostocales</taxon>
        <taxon>Nostocaceae</taxon>
        <taxon>Nostoc</taxon>
    </lineage>
</organism>
<reference key="1">
    <citation type="journal article" date="2001" name="DNA Res.">
        <title>Complete genomic sequence of the filamentous nitrogen-fixing cyanobacterium Anabaena sp. strain PCC 7120.</title>
        <authorList>
            <person name="Kaneko T."/>
            <person name="Nakamura Y."/>
            <person name="Wolk C.P."/>
            <person name="Kuritz T."/>
            <person name="Sasamoto S."/>
            <person name="Watanabe A."/>
            <person name="Iriguchi M."/>
            <person name="Ishikawa A."/>
            <person name="Kawashima K."/>
            <person name="Kimura T."/>
            <person name="Kishida Y."/>
            <person name="Kohara M."/>
            <person name="Matsumoto M."/>
            <person name="Matsuno A."/>
            <person name="Muraki A."/>
            <person name="Nakazaki N."/>
            <person name="Shimpo S."/>
            <person name="Sugimoto M."/>
            <person name="Takazawa M."/>
            <person name="Yamada M."/>
            <person name="Yasuda M."/>
            <person name="Tabata S."/>
        </authorList>
    </citation>
    <scope>NUCLEOTIDE SEQUENCE [LARGE SCALE GENOMIC DNA]</scope>
    <source>
        <strain>PCC 7120 / SAG 25.82 / UTEX 2576</strain>
    </source>
</reference>
<comment type="function">
    <text evidence="2">With S4 and S5 plays an important role in translational accuracy.</text>
</comment>
<comment type="function">
    <text evidence="2">Interacts with and stabilizes bases of the 16S rRNA that are involved in tRNA selection in the A site and with the mRNA backbone. Located at the interface of the 30S and 50S subunits, it traverses the body of the 30S subunit contacting proteins on the other side and probably holding the rRNA structure together. The combined cluster of proteins S8, S12 and S17 appears to hold together the shoulder and platform of the 30S subunit.</text>
</comment>
<comment type="subunit">
    <text evidence="2">Part of the 30S ribosomal subunit. Contacts proteins S8 and S17. May interact with IF1 in the 30S initiation complex.</text>
</comment>
<comment type="similarity">
    <text evidence="2">Belongs to the universal ribosomal protein uS12 family.</text>
</comment>
<proteinExistence type="inferred from homology"/>
<name>RS12_NOSS1</name>